<sequence length="614" mass="68848">MSLAKRFVHLRKASPSFCLRGIYFSGLSYDGYREKLSRNALLHLKLDEAVDLFGEMVKSRPFPSIVEFSKLLSAIAKMKKFDLVISFGEKMEILGVSHNLYTYNIMINCLCRRSQLSFALAILGKMMKLGYGPSIVTLNSLLNGFCHGNRISEAVALVDQMVEMGYQPDTVTFTTLVHGLFQHNKASEAVALVERMVVKGCQPDLVTYGAVINGLCKRGEPDLALNLLNKMEKGKIEADVVIYSTVIDSLCKYRHVDDALNLFTEMDNKGIRPDVFTYSSLISCLCNYGRWSDASRLLSDMLERKINPNVVTFNSLIDAFAKEGKLIEAEKLFDEMIQRSIDPNIVTYNSLINGFCMHDRLDEAQQIFTLMVSKDCLPDVVTYNTLINGFCKAKKVVDGMELFRDMSRRGLVGNTVTYTTLIHGFFQASDCDNAQMVFKQMVSDGVHPNIMTYNTLLDGLCKNGKLEKAMVVFEYLQKSKMEPDIYTYNIMSEGMCKAGKVEDGWDLFCSLSLKGVKPDVIAYNTMISGFCKKGLKEEAYTLFIKMKEDGPLPDSGTYNTLIRAHLRDGDKAASAELIKEMRSCRFAGDASTYGLVTDMLHDGRLDKGFLEVLS</sequence>
<evidence type="ECO:0000255" key="1"/>
<evidence type="ECO:0000305" key="2"/>
<dbReference type="EMBL" id="AC010795">
    <property type="protein sequence ID" value="AAG51614.1"/>
    <property type="molecule type" value="Genomic_DNA"/>
</dbReference>
<dbReference type="EMBL" id="CP002684">
    <property type="protein sequence ID" value="AEE34051.1"/>
    <property type="molecule type" value="Genomic_DNA"/>
</dbReference>
<dbReference type="EMBL" id="CP002684">
    <property type="protein sequence ID" value="ANM58874.1"/>
    <property type="molecule type" value="Genomic_DNA"/>
</dbReference>
<dbReference type="EMBL" id="CP002684">
    <property type="protein sequence ID" value="ANM58875.1"/>
    <property type="molecule type" value="Genomic_DNA"/>
</dbReference>
<dbReference type="EMBL" id="AK226724">
    <property type="status" value="NOT_ANNOTATED_CDS"/>
    <property type="molecule type" value="mRNA"/>
</dbReference>
<dbReference type="PIR" id="B96656">
    <property type="entry name" value="B96656"/>
</dbReference>
<dbReference type="RefSeq" id="NP_001319297.1">
    <property type="nucleotide sequence ID" value="NM_001334064.1"/>
</dbReference>
<dbReference type="RefSeq" id="NP_001321279.1">
    <property type="nucleotide sequence ID" value="NM_001334065.1"/>
</dbReference>
<dbReference type="RefSeq" id="NP_176496.1">
    <property type="nucleotide sequence ID" value="NM_104986.3"/>
</dbReference>
<dbReference type="SMR" id="Q9CAN5"/>
<dbReference type="FunCoup" id="Q9CAN5">
    <property type="interactions" value="20"/>
</dbReference>
<dbReference type="STRING" id="3702.Q9CAN5"/>
<dbReference type="PaxDb" id="3702-AT1G63080.1"/>
<dbReference type="ProteomicsDB" id="236595"/>
<dbReference type="EnsemblPlants" id="AT1G63080.1">
    <property type="protein sequence ID" value="AT1G63080.1"/>
    <property type="gene ID" value="AT1G63080"/>
</dbReference>
<dbReference type="EnsemblPlants" id="AT1G63080.2">
    <property type="protein sequence ID" value="AT1G63080.2"/>
    <property type="gene ID" value="AT1G63080"/>
</dbReference>
<dbReference type="EnsemblPlants" id="AT1G63080.3">
    <property type="protein sequence ID" value="AT1G63080.3"/>
    <property type="gene ID" value="AT1G63080"/>
</dbReference>
<dbReference type="GeneID" id="842611"/>
<dbReference type="Gramene" id="AT1G63080.1">
    <property type="protein sequence ID" value="AT1G63080.1"/>
    <property type="gene ID" value="AT1G63080"/>
</dbReference>
<dbReference type="Gramene" id="AT1G63080.2">
    <property type="protein sequence ID" value="AT1G63080.2"/>
    <property type="gene ID" value="AT1G63080"/>
</dbReference>
<dbReference type="Gramene" id="AT1G63080.3">
    <property type="protein sequence ID" value="AT1G63080.3"/>
    <property type="gene ID" value="AT1G63080"/>
</dbReference>
<dbReference type="KEGG" id="ath:AT1G63080"/>
<dbReference type="Araport" id="AT1G63080"/>
<dbReference type="TAIR" id="AT1G63080"/>
<dbReference type="eggNOG" id="KOG4197">
    <property type="taxonomic scope" value="Eukaryota"/>
</dbReference>
<dbReference type="HOGENOM" id="CLU_002706_49_0_1"/>
<dbReference type="InParanoid" id="Q9CAN5"/>
<dbReference type="OMA" id="MEFFHEI"/>
<dbReference type="PhylomeDB" id="Q9CAN5"/>
<dbReference type="PRO" id="PR:Q9CAN5"/>
<dbReference type="Proteomes" id="UP000006548">
    <property type="component" value="Chromosome 1"/>
</dbReference>
<dbReference type="ExpressionAtlas" id="Q9CAN5">
    <property type="expression patterns" value="baseline and differential"/>
</dbReference>
<dbReference type="GO" id="GO:0005739">
    <property type="term" value="C:mitochondrion"/>
    <property type="evidence" value="ECO:0007669"/>
    <property type="project" value="UniProtKB-SubCell"/>
</dbReference>
<dbReference type="FunFam" id="1.25.40.10:FF:003300">
    <property type="entry name" value="Pentatricopeptide repeat-containing protein At1g62590"/>
    <property type="match status" value="1"/>
</dbReference>
<dbReference type="FunFam" id="1.25.40.10:FF:002115">
    <property type="entry name" value="Pentatricopeptide repeat-containing protein At1g62720"/>
    <property type="match status" value="1"/>
</dbReference>
<dbReference type="FunFam" id="1.25.40.10:FF:000558">
    <property type="entry name" value="Pentatricopeptide repeat-containing protein At5g39710"/>
    <property type="match status" value="1"/>
</dbReference>
<dbReference type="Gene3D" id="1.25.40.10">
    <property type="entry name" value="Tetratricopeptide repeat domain"/>
    <property type="match status" value="6"/>
</dbReference>
<dbReference type="InterPro" id="IPR051240">
    <property type="entry name" value="Mito_RNA-Proc/Resp"/>
</dbReference>
<dbReference type="InterPro" id="IPR002885">
    <property type="entry name" value="Pentatricopeptide_rpt"/>
</dbReference>
<dbReference type="InterPro" id="IPR011990">
    <property type="entry name" value="TPR-like_helical_dom_sf"/>
</dbReference>
<dbReference type="NCBIfam" id="TIGR00756">
    <property type="entry name" value="PPR"/>
    <property type="match status" value="14"/>
</dbReference>
<dbReference type="PANTHER" id="PTHR47933:SF45">
    <property type="entry name" value="PENTACOTRIPEPTIDE-REPEAT REGION OF PRORP DOMAIN-CONTAINING PROTEIN"/>
    <property type="match status" value="1"/>
</dbReference>
<dbReference type="PANTHER" id="PTHR47933">
    <property type="entry name" value="PENTATRICOPEPTIDE REPEAT-CONTAINING PROTEIN 1, MITOCHONDRIAL"/>
    <property type="match status" value="1"/>
</dbReference>
<dbReference type="Pfam" id="PF01535">
    <property type="entry name" value="PPR"/>
    <property type="match status" value="1"/>
</dbReference>
<dbReference type="Pfam" id="PF12854">
    <property type="entry name" value="PPR_1"/>
    <property type="match status" value="1"/>
</dbReference>
<dbReference type="Pfam" id="PF13041">
    <property type="entry name" value="PPR_2"/>
    <property type="match status" value="7"/>
</dbReference>
<dbReference type="SUPFAM" id="SSF48452">
    <property type="entry name" value="TPR-like"/>
    <property type="match status" value="1"/>
</dbReference>
<dbReference type="PROSITE" id="PS51375">
    <property type="entry name" value="PPR"/>
    <property type="match status" value="15"/>
</dbReference>
<name>PPR98_ARATH</name>
<organism>
    <name type="scientific">Arabidopsis thaliana</name>
    <name type="common">Mouse-ear cress</name>
    <dbReference type="NCBI Taxonomy" id="3702"/>
    <lineage>
        <taxon>Eukaryota</taxon>
        <taxon>Viridiplantae</taxon>
        <taxon>Streptophyta</taxon>
        <taxon>Embryophyta</taxon>
        <taxon>Tracheophyta</taxon>
        <taxon>Spermatophyta</taxon>
        <taxon>Magnoliopsida</taxon>
        <taxon>eudicotyledons</taxon>
        <taxon>Gunneridae</taxon>
        <taxon>Pentapetalae</taxon>
        <taxon>rosids</taxon>
        <taxon>malvids</taxon>
        <taxon>Brassicales</taxon>
        <taxon>Brassicaceae</taxon>
        <taxon>Camelineae</taxon>
        <taxon>Arabidopsis</taxon>
    </lineage>
</organism>
<reference key="1">
    <citation type="journal article" date="2000" name="Nature">
        <title>Sequence and analysis of chromosome 1 of the plant Arabidopsis thaliana.</title>
        <authorList>
            <person name="Theologis A."/>
            <person name="Ecker J.R."/>
            <person name="Palm C.J."/>
            <person name="Federspiel N.A."/>
            <person name="Kaul S."/>
            <person name="White O."/>
            <person name="Alonso J."/>
            <person name="Altafi H."/>
            <person name="Araujo R."/>
            <person name="Bowman C.L."/>
            <person name="Brooks S.Y."/>
            <person name="Buehler E."/>
            <person name="Chan A."/>
            <person name="Chao Q."/>
            <person name="Chen H."/>
            <person name="Cheuk R.F."/>
            <person name="Chin C.W."/>
            <person name="Chung M.K."/>
            <person name="Conn L."/>
            <person name="Conway A.B."/>
            <person name="Conway A.R."/>
            <person name="Creasy T.H."/>
            <person name="Dewar K."/>
            <person name="Dunn P."/>
            <person name="Etgu P."/>
            <person name="Feldblyum T.V."/>
            <person name="Feng J.-D."/>
            <person name="Fong B."/>
            <person name="Fujii C.Y."/>
            <person name="Gill J.E."/>
            <person name="Goldsmith A.D."/>
            <person name="Haas B."/>
            <person name="Hansen N.F."/>
            <person name="Hughes B."/>
            <person name="Huizar L."/>
            <person name="Hunter J.L."/>
            <person name="Jenkins J."/>
            <person name="Johnson-Hopson C."/>
            <person name="Khan S."/>
            <person name="Khaykin E."/>
            <person name="Kim C.J."/>
            <person name="Koo H.L."/>
            <person name="Kremenetskaia I."/>
            <person name="Kurtz D.B."/>
            <person name="Kwan A."/>
            <person name="Lam B."/>
            <person name="Langin-Hooper S."/>
            <person name="Lee A."/>
            <person name="Lee J.M."/>
            <person name="Lenz C.A."/>
            <person name="Li J.H."/>
            <person name="Li Y.-P."/>
            <person name="Lin X."/>
            <person name="Liu S.X."/>
            <person name="Liu Z.A."/>
            <person name="Luros J.S."/>
            <person name="Maiti R."/>
            <person name="Marziali A."/>
            <person name="Militscher J."/>
            <person name="Miranda M."/>
            <person name="Nguyen M."/>
            <person name="Nierman W.C."/>
            <person name="Osborne B.I."/>
            <person name="Pai G."/>
            <person name="Peterson J."/>
            <person name="Pham P.K."/>
            <person name="Rizzo M."/>
            <person name="Rooney T."/>
            <person name="Rowley D."/>
            <person name="Sakano H."/>
            <person name="Salzberg S.L."/>
            <person name="Schwartz J.R."/>
            <person name="Shinn P."/>
            <person name="Southwick A.M."/>
            <person name="Sun H."/>
            <person name="Tallon L.J."/>
            <person name="Tambunga G."/>
            <person name="Toriumi M.J."/>
            <person name="Town C.D."/>
            <person name="Utterback T."/>
            <person name="Van Aken S."/>
            <person name="Vaysberg M."/>
            <person name="Vysotskaia V.S."/>
            <person name="Walker M."/>
            <person name="Wu D."/>
            <person name="Yu G."/>
            <person name="Fraser C.M."/>
            <person name="Venter J.C."/>
            <person name="Davis R.W."/>
        </authorList>
    </citation>
    <scope>NUCLEOTIDE SEQUENCE [LARGE SCALE GENOMIC DNA]</scope>
    <source>
        <strain>cv. Columbia</strain>
    </source>
</reference>
<reference key="2">
    <citation type="journal article" date="2017" name="Plant J.">
        <title>Araport11: a complete reannotation of the Arabidopsis thaliana reference genome.</title>
        <authorList>
            <person name="Cheng C.Y."/>
            <person name="Krishnakumar V."/>
            <person name="Chan A.P."/>
            <person name="Thibaud-Nissen F."/>
            <person name="Schobel S."/>
            <person name="Town C.D."/>
        </authorList>
    </citation>
    <scope>GENOME REANNOTATION</scope>
    <source>
        <strain>cv. Columbia</strain>
    </source>
</reference>
<reference key="3">
    <citation type="submission" date="2006-07" db="EMBL/GenBank/DDBJ databases">
        <title>Large-scale analysis of RIKEN Arabidopsis full-length (RAFL) cDNAs.</title>
        <authorList>
            <person name="Totoki Y."/>
            <person name="Seki M."/>
            <person name="Ishida J."/>
            <person name="Nakajima M."/>
            <person name="Enju A."/>
            <person name="Kamiya A."/>
            <person name="Narusaka M."/>
            <person name="Shin-i T."/>
            <person name="Nakagawa M."/>
            <person name="Sakamoto N."/>
            <person name="Oishi K."/>
            <person name="Kohara Y."/>
            <person name="Kobayashi M."/>
            <person name="Toyoda A."/>
            <person name="Sakaki Y."/>
            <person name="Sakurai T."/>
            <person name="Iida K."/>
            <person name="Akiyama K."/>
            <person name="Satou M."/>
            <person name="Toyoda T."/>
            <person name="Konagaya A."/>
            <person name="Carninci P."/>
            <person name="Kawai J."/>
            <person name="Hayashizaki Y."/>
            <person name="Shinozaki K."/>
        </authorList>
    </citation>
    <scope>NUCLEOTIDE SEQUENCE [LARGE SCALE MRNA]</scope>
    <source>
        <strain>cv. Columbia</strain>
    </source>
</reference>
<reference key="4">
    <citation type="journal article" date="2004" name="Plant Cell">
        <title>Genome-wide analysis of Arabidopsis pentatricopeptide repeat proteins reveals their essential role in organelle biogenesis.</title>
        <authorList>
            <person name="Lurin C."/>
            <person name="Andres C."/>
            <person name="Aubourg S."/>
            <person name="Bellaoui M."/>
            <person name="Bitton F."/>
            <person name="Bruyere C."/>
            <person name="Caboche M."/>
            <person name="Debast C."/>
            <person name="Gualberto J."/>
            <person name="Hoffmann B."/>
            <person name="Lecharny A."/>
            <person name="Le Ret M."/>
            <person name="Martin-Magniette M.-L."/>
            <person name="Mireau H."/>
            <person name="Peeters N."/>
            <person name="Renou J.-P."/>
            <person name="Szurek B."/>
            <person name="Taconnat L."/>
            <person name="Small I."/>
        </authorList>
    </citation>
    <scope>GENE FAMILY</scope>
</reference>
<proteinExistence type="evidence at transcript level"/>
<comment type="subcellular location">
    <subcellularLocation>
        <location evidence="2">Mitochondrion</location>
    </subcellularLocation>
</comment>
<comment type="similarity">
    <text evidence="2">Belongs to the PPR family. P subfamily.</text>
</comment>
<comment type="sequence caution" evidence="2">
    <conflict type="frameshift">
        <sequence resource="EMBL" id="AK226724"/>
    </conflict>
</comment>
<comment type="online information" name="Pentatricopeptide repeat proteins">
    <link uri="https://ppr.plantenergy.uwa.edu.au"/>
</comment>
<keyword id="KW-0496">Mitochondrion</keyword>
<keyword id="KW-1185">Reference proteome</keyword>
<keyword id="KW-0677">Repeat</keyword>
<keyword id="KW-0809">Transit peptide</keyword>
<gene>
    <name type="ordered locus">At1g63080</name>
    <name type="ORF">F16M19.17</name>
</gene>
<accession>Q9CAN5</accession>
<protein>
    <recommendedName>
        <fullName>Pentatricopeptide repeat-containing protein At1g63080, mitochondrial</fullName>
    </recommendedName>
</protein>
<feature type="transit peptide" description="Mitochondrion" evidence="1">
    <location>
        <begin position="1"/>
        <end position="7"/>
    </location>
</feature>
<feature type="chain" id="PRO_0000342839" description="Pentatricopeptide repeat-containing protein At1g63080, mitochondrial">
    <location>
        <begin position="8"/>
        <end position="614"/>
    </location>
</feature>
<feature type="repeat" description="PPR 1">
    <location>
        <begin position="64"/>
        <end position="98"/>
    </location>
</feature>
<feature type="repeat" description="PPR 2">
    <location>
        <begin position="99"/>
        <end position="133"/>
    </location>
</feature>
<feature type="repeat" description="PPR 3">
    <location>
        <begin position="134"/>
        <end position="168"/>
    </location>
</feature>
<feature type="repeat" description="PPR 4">
    <location>
        <begin position="169"/>
        <end position="203"/>
    </location>
</feature>
<feature type="repeat" description="PPR 5">
    <location>
        <begin position="204"/>
        <end position="238"/>
    </location>
</feature>
<feature type="repeat" description="PPR 6">
    <location>
        <begin position="239"/>
        <end position="273"/>
    </location>
</feature>
<feature type="repeat" description="PPR 7">
    <location>
        <begin position="274"/>
        <end position="308"/>
    </location>
</feature>
<feature type="repeat" description="PPR 8">
    <location>
        <begin position="309"/>
        <end position="343"/>
    </location>
</feature>
<feature type="repeat" description="PPR 9">
    <location>
        <begin position="344"/>
        <end position="378"/>
    </location>
</feature>
<feature type="repeat" description="PPR 10">
    <location>
        <begin position="379"/>
        <end position="413"/>
    </location>
</feature>
<feature type="repeat" description="PPR 11">
    <location>
        <begin position="414"/>
        <end position="448"/>
    </location>
</feature>
<feature type="repeat" description="PPR 12">
    <location>
        <begin position="449"/>
        <end position="483"/>
    </location>
</feature>
<feature type="repeat" description="PPR 13">
    <location>
        <begin position="484"/>
        <end position="518"/>
    </location>
</feature>
<feature type="repeat" description="PPR 14">
    <location>
        <begin position="519"/>
        <end position="553"/>
    </location>
</feature>
<feature type="repeat" description="PPR 15">
    <location>
        <begin position="554"/>
        <end position="588"/>
    </location>
</feature>